<comment type="function">
    <text evidence="1">Catalyzes the attachment of glutamate to tRNA(Glu) in a two-step reaction: glutamate is first activated by ATP to form Glu-AMP and then transferred to the acceptor end of tRNA(Glu).</text>
</comment>
<comment type="catalytic activity">
    <reaction evidence="1">
        <text>tRNA(Glu) + L-glutamate + ATP = L-glutamyl-tRNA(Glu) + AMP + diphosphate</text>
        <dbReference type="Rhea" id="RHEA:23540"/>
        <dbReference type="Rhea" id="RHEA-COMP:9663"/>
        <dbReference type="Rhea" id="RHEA-COMP:9680"/>
        <dbReference type="ChEBI" id="CHEBI:29985"/>
        <dbReference type="ChEBI" id="CHEBI:30616"/>
        <dbReference type="ChEBI" id="CHEBI:33019"/>
        <dbReference type="ChEBI" id="CHEBI:78442"/>
        <dbReference type="ChEBI" id="CHEBI:78520"/>
        <dbReference type="ChEBI" id="CHEBI:456215"/>
        <dbReference type="EC" id="6.1.1.17"/>
    </reaction>
</comment>
<comment type="cofactor">
    <cofactor evidence="1">
        <name>Zn(2+)</name>
        <dbReference type="ChEBI" id="CHEBI:29105"/>
    </cofactor>
    <text evidence="1">Binds 1 zinc ion per subunit.</text>
</comment>
<comment type="subunit">
    <text evidence="1">Monomer.</text>
</comment>
<comment type="subcellular location">
    <subcellularLocation>
        <location evidence="1">Cytoplasm</location>
    </subcellularLocation>
</comment>
<comment type="similarity">
    <text evidence="1">Belongs to the class-I aminoacyl-tRNA synthetase family. Glutamate--tRNA ligase type 1 subfamily.</text>
</comment>
<accession>B2KAV3</accession>
<proteinExistence type="inferred from homology"/>
<reference key="1">
    <citation type="journal article" date="2009" name="Appl. Environ. Microbiol.">
        <title>Genomic analysis of 'Elusimicrobium minutum,' the first cultivated representative of the phylum 'Elusimicrobia' (formerly termite group 1).</title>
        <authorList>
            <person name="Herlemann D.P.R."/>
            <person name="Geissinger O."/>
            <person name="Ikeda-Ohtsubo W."/>
            <person name="Kunin V."/>
            <person name="Sun H."/>
            <person name="Lapidus A."/>
            <person name="Hugenholtz P."/>
            <person name="Brune A."/>
        </authorList>
    </citation>
    <scope>NUCLEOTIDE SEQUENCE [LARGE SCALE GENOMIC DNA]</scope>
    <source>
        <strain>Pei191</strain>
    </source>
</reference>
<evidence type="ECO:0000255" key="1">
    <source>
        <dbReference type="HAMAP-Rule" id="MF_00022"/>
    </source>
</evidence>
<feature type="chain" id="PRO_0000367667" description="Glutamate--tRNA ligase">
    <location>
        <begin position="1"/>
        <end position="488"/>
    </location>
</feature>
<feature type="short sequence motif" description="'HIGH' region" evidence="1">
    <location>
        <begin position="9"/>
        <end position="19"/>
    </location>
</feature>
<feature type="short sequence motif" description="'KMSKS' region" evidence="1">
    <location>
        <begin position="256"/>
        <end position="260"/>
    </location>
</feature>
<feature type="binding site" evidence="1">
    <location>
        <position position="112"/>
    </location>
    <ligand>
        <name>Zn(2+)</name>
        <dbReference type="ChEBI" id="CHEBI:29105"/>
    </ligand>
</feature>
<feature type="binding site" evidence="1">
    <location>
        <position position="114"/>
    </location>
    <ligand>
        <name>Zn(2+)</name>
        <dbReference type="ChEBI" id="CHEBI:29105"/>
    </ligand>
</feature>
<feature type="binding site" evidence="1">
    <location>
        <position position="139"/>
    </location>
    <ligand>
        <name>Zn(2+)</name>
        <dbReference type="ChEBI" id="CHEBI:29105"/>
    </ligand>
</feature>
<feature type="binding site" evidence="1">
    <location>
        <position position="141"/>
    </location>
    <ligand>
        <name>Zn(2+)</name>
        <dbReference type="ChEBI" id="CHEBI:29105"/>
    </ligand>
</feature>
<feature type="binding site" evidence="1">
    <location>
        <position position="259"/>
    </location>
    <ligand>
        <name>ATP</name>
        <dbReference type="ChEBI" id="CHEBI:30616"/>
    </ligand>
</feature>
<name>SYE_ELUMP</name>
<keyword id="KW-0030">Aminoacyl-tRNA synthetase</keyword>
<keyword id="KW-0067">ATP-binding</keyword>
<keyword id="KW-0963">Cytoplasm</keyword>
<keyword id="KW-0436">Ligase</keyword>
<keyword id="KW-0479">Metal-binding</keyword>
<keyword id="KW-0547">Nucleotide-binding</keyword>
<keyword id="KW-0648">Protein biosynthesis</keyword>
<keyword id="KW-1185">Reference proteome</keyword>
<keyword id="KW-0862">Zinc</keyword>
<sequence>MKIRVRFAPSPTGFLHIGGVRTALFNYLFAKRYGGTFVLRIEDTDELRSTEESTQAIFDGLEWTKLLWDEGPFRDGKENGPYPPYLQSERVKAGIYQKYIDQLLEEGKAYKCYCTPEELEAMREEAAAKKLPPRYPGKCKHLTKDEQAALEAQGRKPVIRFNMPSEGSVEWADLIRGPVSFASKDLYDLVISKPSGFPTYNFACVIDDHLMEMSHIIRGEDHISNTPMQIQMYKAFGWTPPEFGHLPMIHGSDGTKLSKRHGATNVIEYQKQGYLSEALVNYLALLGWSNSESQQLFAPGELEQKFDIKGVQKSPAIFDNAKLDWMNSEYIRATPISKLTDLAIPFIKEENIDISKTDRAALENIIAIEQEKYRTLKEIPGLIKFFFEDVVFEEGAKEKVYGKPESKDVLLGITRVYQNIEPFKEADLEAATRAFAKDNGFKTGQIFHPVRVAVSGRTHGPTLFKMLELLGKETVIKRLNEAAKYSNI</sequence>
<gene>
    <name evidence="1" type="primary">gltX</name>
    <name type="ordered locus">Emin_0083</name>
</gene>
<organism>
    <name type="scientific">Elusimicrobium minutum (strain Pei191)</name>
    <dbReference type="NCBI Taxonomy" id="445932"/>
    <lineage>
        <taxon>Bacteria</taxon>
        <taxon>Pseudomonadati</taxon>
        <taxon>Elusimicrobiota</taxon>
        <taxon>Elusimicrobia</taxon>
        <taxon>Elusimicrobiales</taxon>
        <taxon>Elusimicrobiaceae</taxon>
        <taxon>Elusimicrobium</taxon>
    </lineage>
</organism>
<dbReference type="EC" id="6.1.1.17" evidence="1"/>
<dbReference type="EMBL" id="CP001055">
    <property type="protein sequence ID" value="ACC97649.1"/>
    <property type="molecule type" value="Genomic_DNA"/>
</dbReference>
<dbReference type="RefSeq" id="WP_012414264.1">
    <property type="nucleotide sequence ID" value="NC_010644.1"/>
</dbReference>
<dbReference type="SMR" id="B2KAV3"/>
<dbReference type="STRING" id="445932.Emin_0083"/>
<dbReference type="KEGG" id="emi:Emin_0083"/>
<dbReference type="HOGENOM" id="CLU_015768_6_3_0"/>
<dbReference type="OrthoDB" id="9807503at2"/>
<dbReference type="Proteomes" id="UP000001029">
    <property type="component" value="Chromosome"/>
</dbReference>
<dbReference type="GO" id="GO:0005829">
    <property type="term" value="C:cytosol"/>
    <property type="evidence" value="ECO:0007669"/>
    <property type="project" value="TreeGrafter"/>
</dbReference>
<dbReference type="GO" id="GO:0005524">
    <property type="term" value="F:ATP binding"/>
    <property type="evidence" value="ECO:0007669"/>
    <property type="project" value="UniProtKB-UniRule"/>
</dbReference>
<dbReference type="GO" id="GO:0004818">
    <property type="term" value="F:glutamate-tRNA ligase activity"/>
    <property type="evidence" value="ECO:0007669"/>
    <property type="project" value="UniProtKB-UniRule"/>
</dbReference>
<dbReference type="GO" id="GO:0000049">
    <property type="term" value="F:tRNA binding"/>
    <property type="evidence" value="ECO:0007669"/>
    <property type="project" value="InterPro"/>
</dbReference>
<dbReference type="GO" id="GO:0008270">
    <property type="term" value="F:zinc ion binding"/>
    <property type="evidence" value="ECO:0007669"/>
    <property type="project" value="UniProtKB-UniRule"/>
</dbReference>
<dbReference type="GO" id="GO:0006424">
    <property type="term" value="P:glutamyl-tRNA aminoacylation"/>
    <property type="evidence" value="ECO:0007669"/>
    <property type="project" value="UniProtKB-UniRule"/>
</dbReference>
<dbReference type="CDD" id="cd00808">
    <property type="entry name" value="GluRS_core"/>
    <property type="match status" value="1"/>
</dbReference>
<dbReference type="FunFam" id="3.40.50.620:FF:000007">
    <property type="entry name" value="Glutamate--tRNA ligase"/>
    <property type="match status" value="1"/>
</dbReference>
<dbReference type="Gene3D" id="1.10.10.350">
    <property type="match status" value="1"/>
</dbReference>
<dbReference type="Gene3D" id="3.40.50.620">
    <property type="entry name" value="HUPs"/>
    <property type="match status" value="1"/>
</dbReference>
<dbReference type="HAMAP" id="MF_00022">
    <property type="entry name" value="Glu_tRNA_synth_type1"/>
    <property type="match status" value="1"/>
</dbReference>
<dbReference type="InterPro" id="IPR045462">
    <property type="entry name" value="aa-tRNA-synth_I_cd-bd"/>
</dbReference>
<dbReference type="InterPro" id="IPR020751">
    <property type="entry name" value="aa-tRNA-synth_I_codon-bd_sub2"/>
</dbReference>
<dbReference type="InterPro" id="IPR001412">
    <property type="entry name" value="aa-tRNA-synth_I_CS"/>
</dbReference>
<dbReference type="InterPro" id="IPR008925">
    <property type="entry name" value="aa_tRNA-synth_I_cd-bd_sf"/>
</dbReference>
<dbReference type="InterPro" id="IPR004527">
    <property type="entry name" value="Glu-tRNA-ligase_bac/mito"/>
</dbReference>
<dbReference type="InterPro" id="IPR000924">
    <property type="entry name" value="Glu/Gln-tRNA-synth"/>
</dbReference>
<dbReference type="InterPro" id="IPR020058">
    <property type="entry name" value="Glu/Gln-tRNA-synth_Ib_cat-dom"/>
</dbReference>
<dbReference type="InterPro" id="IPR049940">
    <property type="entry name" value="GluQ/Sye"/>
</dbReference>
<dbReference type="InterPro" id="IPR033910">
    <property type="entry name" value="GluRS_core"/>
</dbReference>
<dbReference type="InterPro" id="IPR014729">
    <property type="entry name" value="Rossmann-like_a/b/a_fold"/>
</dbReference>
<dbReference type="NCBIfam" id="TIGR00464">
    <property type="entry name" value="gltX_bact"/>
    <property type="match status" value="1"/>
</dbReference>
<dbReference type="PANTHER" id="PTHR43311">
    <property type="entry name" value="GLUTAMATE--TRNA LIGASE"/>
    <property type="match status" value="1"/>
</dbReference>
<dbReference type="PANTHER" id="PTHR43311:SF2">
    <property type="entry name" value="GLUTAMATE--TRNA LIGASE, MITOCHONDRIAL-RELATED"/>
    <property type="match status" value="1"/>
</dbReference>
<dbReference type="Pfam" id="PF19269">
    <property type="entry name" value="Anticodon_2"/>
    <property type="match status" value="1"/>
</dbReference>
<dbReference type="Pfam" id="PF00749">
    <property type="entry name" value="tRNA-synt_1c"/>
    <property type="match status" value="1"/>
</dbReference>
<dbReference type="PRINTS" id="PR00987">
    <property type="entry name" value="TRNASYNTHGLU"/>
</dbReference>
<dbReference type="SUPFAM" id="SSF48163">
    <property type="entry name" value="An anticodon-binding domain of class I aminoacyl-tRNA synthetases"/>
    <property type="match status" value="1"/>
</dbReference>
<dbReference type="SUPFAM" id="SSF52374">
    <property type="entry name" value="Nucleotidylyl transferase"/>
    <property type="match status" value="1"/>
</dbReference>
<dbReference type="PROSITE" id="PS00178">
    <property type="entry name" value="AA_TRNA_LIGASE_I"/>
    <property type="match status" value="1"/>
</dbReference>
<protein>
    <recommendedName>
        <fullName evidence="1">Glutamate--tRNA ligase</fullName>
        <ecNumber evidence="1">6.1.1.17</ecNumber>
    </recommendedName>
    <alternativeName>
        <fullName evidence="1">Glutamyl-tRNA synthetase</fullName>
        <shortName evidence="1">GluRS</shortName>
    </alternativeName>
</protein>